<comment type="function">
    <text evidence="1">Catalyzes the reversible reaction in which hydroxymethyl group from 5,10-methylenetetrahydrofolate is transferred onto alpha-ketoisovalerate to form ketopantoate.</text>
</comment>
<comment type="catalytic activity">
    <reaction evidence="1">
        <text>3-methyl-2-oxobutanoate + (6R)-5,10-methylene-5,6,7,8-tetrahydrofolate + H2O = 2-dehydropantoate + (6S)-5,6,7,8-tetrahydrofolate</text>
        <dbReference type="Rhea" id="RHEA:11824"/>
        <dbReference type="ChEBI" id="CHEBI:11561"/>
        <dbReference type="ChEBI" id="CHEBI:11851"/>
        <dbReference type="ChEBI" id="CHEBI:15377"/>
        <dbReference type="ChEBI" id="CHEBI:15636"/>
        <dbReference type="ChEBI" id="CHEBI:57453"/>
        <dbReference type="EC" id="2.1.2.11"/>
    </reaction>
</comment>
<comment type="cofactor">
    <cofactor evidence="1">
        <name>Mg(2+)</name>
        <dbReference type="ChEBI" id="CHEBI:18420"/>
    </cofactor>
    <text evidence="1">Binds 1 Mg(2+) ion per subunit.</text>
</comment>
<comment type="pathway">
    <text evidence="1">Cofactor biosynthesis; (R)-pantothenate biosynthesis; (R)-pantoate from 3-methyl-2-oxobutanoate: step 1/2.</text>
</comment>
<comment type="subunit">
    <text evidence="1">Homodecamer; pentamer of dimers.</text>
</comment>
<comment type="subcellular location">
    <subcellularLocation>
        <location evidence="1">Cytoplasm</location>
    </subcellularLocation>
</comment>
<comment type="similarity">
    <text evidence="1">Belongs to the PanB family.</text>
</comment>
<dbReference type="EC" id="2.1.2.11" evidence="1"/>
<dbReference type="EMBL" id="AE016958">
    <property type="protein sequence ID" value="AAS04287.1"/>
    <property type="molecule type" value="Genomic_DNA"/>
</dbReference>
<dbReference type="RefSeq" id="WP_003872340.1">
    <property type="nucleotide sequence ID" value="NZ_CP106873.1"/>
</dbReference>
<dbReference type="SMR" id="Q73YI6"/>
<dbReference type="STRING" id="262316.MAP_1970"/>
<dbReference type="KEGG" id="mpa:MAP_1970"/>
<dbReference type="PATRIC" id="fig|262316.17.peg.2091"/>
<dbReference type="eggNOG" id="COG0413">
    <property type="taxonomic scope" value="Bacteria"/>
</dbReference>
<dbReference type="HOGENOM" id="CLU_036645_1_0_11"/>
<dbReference type="UniPathway" id="UPA00028">
    <property type="reaction ID" value="UER00003"/>
</dbReference>
<dbReference type="Proteomes" id="UP000000580">
    <property type="component" value="Chromosome"/>
</dbReference>
<dbReference type="GO" id="GO:0005737">
    <property type="term" value="C:cytoplasm"/>
    <property type="evidence" value="ECO:0007669"/>
    <property type="project" value="UniProtKB-SubCell"/>
</dbReference>
<dbReference type="GO" id="GO:0003864">
    <property type="term" value="F:3-methyl-2-oxobutanoate hydroxymethyltransferase activity"/>
    <property type="evidence" value="ECO:0007669"/>
    <property type="project" value="UniProtKB-UniRule"/>
</dbReference>
<dbReference type="GO" id="GO:0000287">
    <property type="term" value="F:magnesium ion binding"/>
    <property type="evidence" value="ECO:0007669"/>
    <property type="project" value="TreeGrafter"/>
</dbReference>
<dbReference type="GO" id="GO:0015940">
    <property type="term" value="P:pantothenate biosynthetic process"/>
    <property type="evidence" value="ECO:0007669"/>
    <property type="project" value="UniProtKB-UniRule"/>
</dbReference>
<dbReference type="CDD" id="cd06557">
    <property type="entry name" value="KPHMT-like"/>
    <property type="match status" value="1"/>
</dbReference>
<dbReference type="FunFam" id="3.20.20.60:FF:000003">
    <property type="entry name" value="3-methyl-2-oxobutanoate hydroxymethyltransferase"/>
    <property type="match status" value="1"/>
</dbReference>
<dbReference type="Gene3D" id="3.20.20.60">
    <property type="entry name" value="Phosphoenolpyruvate-binding domains"/>
    <property type="match status" value="1"/>
</dbReference>
<dbReference type="HAMAP" id="MF_00156">
    <property type="entry name" value="PanB"/>
    <property type="match status" value="1"/>
</dbReference>
<dbReference type="InterPro" id="IPR003700">
    <property type="entry name" value="Pantoate_hydroxy_MeTrfase"/>
</dbReference>
<dbReference type="InterPro" id="IPR015813">
    <property type="entry name" value="Pyrv/PenolPyrv_kinase-like_dom"/>
</dbReference>
<dbReference type="InterPro" id="IPR040442">
    <property type="entry name" value="Pyrv_kinase-like_dom_sf"/>
</dbReference>
<dbReference type="NCBIfam" id="TIGR00222">
    <property type="entry name" value="panB"/>
    <property type="match status" value="1"/>
</dbReference>
<dbReference type="NCBIfam" id="NF001452">
    <property type="entry name" value="PRK00311.1"/>
    <property type="match status" value="1"/>
</dbReference>
<dbReference type="PANTHER" id="PTHR20881">
    <property type="entry name" value="3-METHYL-2-OXOBUTANOATE HYDROXYMETHYLTRANSFERASE"/>
    <property type="match status" value="1"/>
</dbReference>
<dbReference type="PANTHER" id="PTHR20881:SF0">
    <property type="entry name" value="3-METHYL-2-OXOBUTANOATE HYDROXYMETHYLTRANSFERASE"/>
    <property type="match status" value="1"/>
</dbReference>
<dbReference type="Pfam" id="PF02548">
    <property type="entry name" value="Pantoate_transf"/>
    <property type="match status" value="1"/>
</dbReference>
<dbReference type="PIRSF" id="PIRSF000388">
    <property type="entry name" value="Pantoate_hydroxy_MeTrfase"/>
    <property type="match status" value="1"/>
</dbReference>
<dbReference type="SUPFAM" id="SSF51621">
    <property type="entry name" value="Phosphoenolpyruvate/pyruvate domain"/>
    <property type="match status" value="1"/>
</dbReference>
<proteinExistence type="inferred from homology"/>
<organism>
    <name type="scientific">Mycolicibacterium paratuberculosis (strain ATCC BAA-968 / K-10)</name>
    <name type="common">Mycobacterium paratuberculosis</name>
    <dbReference type="NCBI Taxonomy" id="262316"/>
    <lineage>
        <taxon>Bacteria</taxon>
        <taxon>Bacillati</taxon>
        <taxon>Actinomycetota</taxon>
        <taxon>Actinomycetes</taxon>
        <taxon>Mycobacteriales</taxon>
        <taxon>Mycobacteriaceae</taxon>
        <taxon>Mycobacterium</taxon>
        <taxon>Mycobacterium avium complex (MAC)</taxon>
    </lineage>
</organism>
<feature type="chain" id="PRO_0000184863" description="3-methyl-2-oxobutanoate hydroxymethyltransferase">
    <location>
        <begin position="1"/>
        <end position="285"/>
    </location>
</feature>
<feature type="region of interest" description="Disordered" evidence="2">
    <location>
        <begin position="1"/>
        <end position="22"/>
    </location>
</feature>
<feature type="compositionally biased region" description="Low complexity" evidence="2">
    <location>
        <begin position="8"/>
        <end position="21"/>
    </location>
</feature>
<feature type="active site" description="Proton acceptor" evidence="1">
    <location>
        <position position="203"/>
    </location>
</feature>
<feature type="binding site" evidence="1">
    <location>
        <begin position="66"/>
        <end position="67"/>
    </location>
    <ligand>
        <name>3-methyl-2-oxobutanoate</name>
        <dbReference type="ChEBI" id="CHEBI:11851"/>
    </ligand>
</feature>
<feature type="binding site" evidence="1">
    <location>
        <position position="66"/>
    </location>
    <ligand>
        <name>Mg(2+)</name>
        <dbReference type="ChEBI" id="CHEBI:18420"/>
    </ligand>
</feature>
<feature type="binding site" evidence="1">
    <location>
        <position position="105"/>
    </location>
    <ligand>
        <name>3-methyl-2-oxobutanoate</name>
        <dbReference type="ChEBI" id="CHEBI:11851"/>
    </ligand>
</feature>
<feature type="binding site" evidence="1">
    <location>
        <position position="105"/>
    </location>
    <ligand>
        <name>Mg(2+)</name>
        <dbReference type="ChEBI" id="CHEBI:18420"/>
    </ligand>
</feature>
<feature type="binding site" evidence="1">
    <location>
        <position position="135"/>
    </location>
    <ligand>
        <name>3-methyl-2-oxobutanoate</name>
        <dbReference type="ChEBI" id="CHEBI:11851"/>
    </ligand>
</feature>
<feature type="binding site" evidence="1">
    <location>
        <position position="137"/>
    </location>
    <ligand>
        <name>Mg(2+)</name>
        <dbReference type="ChEBI" id="CHEBI:18420"/>
    </ligand>
</feature>
<reference key="1">
    <citation type="journal article" date="2005" name="Proc. Natl. Acad. Sci. U.S.A.">
        <title>The complete genome sequence of Mycobacterium avium subspecies paratuberculosis.</title>
        <authorList>
            <person name="Li L."/>
            <person name="Bannantine J.P."/>
            <person name="Zhang Q."/>
            <person name="Amonsin A."/>
            <person name="May B.J."/>
            <person name="Alt D."/>
            <person name="Banerji N."/>
            <person name="Kanjilal S."/>
            <person name="Kapur V."/>
        </authorList>
    </citation>
    <scope>NUCLEOTIDE SEQUENCE [LARGE SCALE GENOMIC DNA]</scope>
    <source>
        <strain>ATCC BAA-968 / K-10</strain>
    </source>
</reference>
<evidence type="ECO:0000255" key="1">
    <source>
        <dbReference type="HAMAP-Rule" id="MF_00156"/>
    </source>
</evidence>
<evidence type="ECO:0000256" key="2">
    <source>
        <dbReference type="SAM" id="MobiDB-lite"/>
    </source>
</evidence>
<sequence length="285" mass="29838">MSEHNVYGAAQPAQPGQPAQPRTRIRTHHLQKMKAEGHKWAMLTAYDYSTARIFDEAGIPVLLVGDSAANVVYGYDTTVPVSIDELIPLVRGVVRGAPHALVVADLPFGSYEAGPAAALAAATRFMKEGGAHAVKLEGGERVAEQIAHLTAAGIPVMAHIGFTPQSVNSLGGFRVQGRGDAAEQTIADAIAVAEAGAFSVVMEMVPAELATQITGKLTIPTIGIGAGPNCDGQVLVWQDMAGMSSGKSARFVKRFADIGGELRRAATQYAHEVAAGVFPADEHCF</sequence>
<name>PANB_MYCPA</name>
<accession>Q73YI6</accession>
<protein>
    <recommendedName>
        <fullName evidence="1">3-methyl-2-oxobutanoate hydroxymethyltransferase</fullName>
        <ecNumber evidence="1">2.1.2.11</ecNumber>
    </recommendedName>
    <alternativeName>
        <fullName evidence="1">Ketopantoate hydroxymethyltransferase</fullName>
        <shortName evidence="1">KPHMT</shortName>
    </alternativeName>
</protein>
<keyword id="KW-0963">Cytoplasm</keyword>
<keyword id="KW-0460">Magnesium</keyword>
<keyword id="KW-0479">Metal-binding</keyword>
<keyword id="KW-0566">Pantothenate biosynthesis</keyword>
<keyword id="KW-1185">Reference proteome</keyword>
<keyword id="KW-0808">Transferase</keyword>
<gene>
    <name evidence="1" type="primary">panB</name>
    <name type="ordered locus">MAP_1970</name>
</gene>